<comment type="function">
    <text evidence="5">Possesses chitinase activity in vitro toward glycol chitin, carboxymethyl-chitin, colloidal chitin, and the chitin oligosaccharides (N-acetylglucosamine) (GlcNAc)6 and (GlcNAc)5 (PubMed:27383628). Hydrolyzes (GlcNAc)6 into (GlcNAc)4 and (GlcNAc)2, or two (GlcNAc)3 molecules (PubMed:27383628). Has the capacity to inhibit hyphal growth of the fungus Trichoderma viride in an agar-plate bioassay (PubMed:27383628).</text>
</comment>
<comment type="catalytic activity">
    <reaction evidence="4 5">
        <text>Random endo-hydrolysis of N-acetyl-beta-D-glucosaminide (1-&gt;4)-beta-linkages in chitin and chitodextrins.</text>
        <dbReference type="EC" id="3.2.1.14"/>
    </reaction>
</comment>
<comment type="pathway">
    <text evidence="7">Glycan degradation; chitin degradation.</text>
</comment>
<comment type="similarity">
    <text evidence="7">Belongs to the glycosyl hydrolase 18 family. Chitinase class V subfamily.</text>
</comment>
<sequence length="384" mass="43241">MAVQKIIITPILVFLVTIFFNVSSSSSSNNSQYQFLNHGVRSAYWPAGDDFSPSLIDTNYFTHILLAFIQPEPISFKLEITKSGIKWGQNFIKALRHRSPPVKTLLSIGGGGSNSTLFSEIASTKQNREIFINSTIEVARKYRFDGVDLDWEFPETQQDMFNLGLLYEEWYNALFAEAKVRRKPRLLLTSAVYYNSTVRLIGKHGPRSYPTQAINKYLDWASPMCFDYHGTWDNNTDFNAALYDSKSEISTNFGLHSWIKSGVRPEKLVMGLALYGRAWELKDPNVNGVGAEAVGPATDTDGSMNYNEILKFNKQSGANVVYDKVAISFYSYAGTTWIGYDDGPSITTKVRFAKSLGLKGYFFWALGKDKDWSISKQASNAWGH</sequence>
<gene>
    <name evidence="6" type="primary">CHIT5A</name>
    <name evidence="8" type="ordered locus">MTR_1g013150</name>
</gene>
<evidence type="ECO:0000255" key="1"/>
<evidence type="ECO:0000255" key="2">
    <source>
        <dbReference type="PROSITE-ProRule" id="PRU00498"/>
    </source>
</evidence>
<evidence type="ECO:0000255" key="3">
    <source>
        <dbReference type="PROSITE-ProRule" id="PRU01258"/>
    </source>
</evidence>
<evidence type="ECO:0000255" key="4">
    <source>
        <dbReference type="PROSITE-ProRule" id="PRU10053"/>
    </source>
</evidence>
<evidence type="ECO:0000269" key="5">
    <source>
    </source>
</evidence>
<evidence type="ECO:0000303" key="6">
    <source>
    </source>
</evidence>
<evidence type="ECO:0000305" key="7"/>
<evidence type="ECO:0000312" key="8">
    <source>
        <dbReference type="EMBL" id="KEH39868.1"/>
    </source>
</evidence>
<feature type="signal peptide" evidence="1">
    <location>
        <begin position="1"/>
        <end position="27"/>
    </location>
</feature>
<feature type="chain" id="PRO_5014500554" description="Class V chitinase CHIT5a">
    <location>
        <begin position="28"/>
        <end position="384"/>
    </location>
</feature>
<feature type="domain" description="GH18" evidence="3">
    <location>
        <begin position="39"/>
        <end position="384"/>
    </location>
</feature>
<feature type="active site" description="Proton donor" evidence="3">
    <location>
        <position position="152"/>
    </location>
</feature>
<feature type="glycosylation site" description="N-linked (GlcNAc...) asparagine" evidence="2">
    <location>
        <position position="29"/>
    </location>
</feature>
<feature type="glycosylation site" description="N-linked (GlcNAc...) asparagine" evidence="2">
    <location>
        <position position="114"/>
    </location>
</feature>
<feature type="glycosylation site" description="N-linked (GlcNAc...) asparagine" evidence="2">
    <location>
        <position position="133"/>
    </location>
</feature>
<feature type="glycosylation site" description="N-linked (GlcNAc...) asparagine" evidence="2">
    <location>
        <position position="195"/>
    </location>
</feature>
<feature type="glycosylation site" description="N-linked (GlcNAc...) asparagine" evidence="2">
    <location>
        <position position="234"/>
    </location>
</feature>
<feature type="sequence conflict" description="In Ref. 1; AGX84978." evidence="7" ref="1">
    <original>I</original>
    <variation>K</variation>
    <location>
        <position position="85"/>
    </location>
</feature>
<feature type="sequence conflict" description="In Ref. 1; AGX84978." evidence="7" ref="1">
    <original>T</original>
    <variation>A</variation>
    <location>
        <position position="211"/>
    </location>
</feature>
<feature type="sequence conflict" description="In Ref. 1; AGX84978." evidence="7" ref="1">
    <original>S</original>
    <variation>T</variation>
    <location>
        <position position="373"/>
    </location>
</feature>
<protein>
    <recommendedName>
        <fullName evidence="7">Class V chitinase CHIT5a</fullName>
        <shortName evidence="6">MtCHIT5a</shortName>
        <ecNumber evidence="5">3.2.1.14</ecNumber>
    </recommendedName>
</protein>
<proteinExistence type="evidence at protein level"/>
<accession>A0A072VEP0</accession>
<accession>U5N1E1</accession>
<name>CHT5A_MEDTR</name>
<organism>
    <name type="scientific">Medicago truncatula</name>
    <name type="common">Barrel medic</name>
    <name type="synonym">Medicago tribuloides</name>
    <dbReference type="NCBI Taxonomy" id="3880"/>
    <lineage>
        <taxon>Eukaryota</taxon>
        <taxon>Viridiplantae</taxon>
        <taxon>Streptophyta</taxon>
        <taxon>Embryophyta</taxon>
        <taxon>Tracheophyta</taxon>
        <taxon>Spermatophyta</taxon>
        <taxon>Magnoliopsida</taxon>
        <taxon>eudicotyledons</taxon>
        <taxon>Gunneridae</taxon>
        <taxon>Pentapetalae</taxon>
        <taxon>rosids</taxon>
        <taxon>fabids</taxon>
        <taxon>Fabales</taxon>
        <taxon>Fabaceae</taxon>
        <taxon>Papilionoideae</taxon>
        <taxon>50 kb inversion clade</taxon>
        <taxon>NPAAA clade</taxon>
        <taxon>Hologalegina</taxon>
        <taxon>IRL clade</taxon>
        <taxon>Trifolieae</taxon>
        <taxon>Medicago</taxon>
    </lineage>
</organism>
<reference key="1">
    <citation type="journal article" date="2013" name="Plant Physiol.">
        <title>The nodulation factor hydrolase of Medicago truncatula: characterization of an enzyme specifically cleaving rhizobial nodulation signals.</title>
        <authorList>
            <person name="Tian Y."/>
            <person name="Liu W."/>
            <person name="Cai J."/>
            <person name="Zhang L.Y."/>
            <person name="Wong K.B."/>
            <person name="Feddermann N."/>
            <person name="Boller T."/>
            <person name="Xie Z.P."/>
            <person name="Staehelin C."/>
        </authorList>
    </citation>
    <scope>NUCLEOTIDE SEQUENCE [MRNA]</scope>
</reference>
<reference key="2">
    <citation type="journal article" date="2011" name="Nature">
        <title>The Medicago genome provides insight into the evolution of rhizobial symbioses.</title>
        <authorList>
            <person name="Young N.D."/>
            <person name="Debelle F."/>
            <person name="Oldroyd G.E.D."/>
            <person name="Geurts R."/>
            <person name="Cannon S.B."/>
            <person name="Udvardi M.K."/>
            <person name="Benedito V.A."/>
            <person name="Mayer K.F.X."/>
            <person name="Gouzy J."/>
            <person name="Schoof H."/>
            <person name="Van de Peer Y."/>
            <person name="Proost S."/>
            <person name="Cook D.R."/>
            <person name="Meyers B.C."/>
            <person name="Spannagl M."/>
            <person name="Cheung F."/>
            <person name="De Mita S."/>
            <person name="Krishnakumar V."/>
            <person name="Gundlach H."/>
            <person name="Zhou S."/>
            <person name="Mudge J."/>
            <person name="Bharti A.K."/>
            <person name="Murray J.D."/>
            <person name="Naoumkina M.A."/>
            <person name="Rosen B."/>
            <person name="Silverstein K.A.T."/>
            <person name="Tang H."/>
            <person name="Rombauts S."/>
            <person name="Zhao P.X."/>
            <person name="Zhou P."/>
            <person name="Barbe V."/>
            <person name="Bardou P."/>
            <person name="Bechner M."/>
            <person name="Bellec A."/>
            <person name="Berger A."/>
            <person name="Berges H."/>
            <person name="Bidwell S."/>
            <person name="Bisseling T."/>
            <person name="Choisne N."/>
            <person name="Couloux A."/>
            <person name="Denny R."/>
            <person name="Deshpande S."/>
            <person name="Dai X."/>
            <person name="Doyle J.J."/>
            <person name="Dudez A.-M."/>
            <person name="Farmer A.D."/>
            <person name="Fouteau S."/>
            <person name="Franken C."/>
            <person name="Gibelin C."/>
            <person name="Gish J."/>
            <person name="Goldstein S."/>
            <person name="Gonzalez A.J."/>
            <person name="Green P.J."/>
            <person name="Hallab A."/>
            <person name="Hartog M."/>
            <person name="Hua A."/>
            <person name="Humphray S.J."/>
            <person name="Jeong D.-H."/>
            <person name="Jing Y."/>
            <person name="Jocker A."/>
            <person name="Kenton S.M."/>
            <person name="Kim D.-J."/>
            <person name="Klee K."/>
            <person name="Lai H."/>
            <person name="Lang C."/>
            <person name="Lin S."/>
            <person name="Macmil S.L."/>
            <person name="Magdelenat G."/>
            <person name="Matthews L."/>
            <person name="McCorrison J."/>
            <person name="Monaghan E.L."/>
            <person name="Mun J.-H."/>
            <person name="Najar F.Z."/>
            <person name="Nicholson C."/>
            <person name="Noirot C."/>
            <person name="O'Bleness M."/>
            <person name="Paule C.R."/>
            <person name="Poulain J."/>
            <person name="Prion F."/>
            <person name="Qin B."/>
            <person name="Qu C."/>
            <person name="Retzel E.F."/>
            <person name="Riddle C."/>
            <person name="Sallet E."/>
            <person name="Samain S."/>
            <person name="Samson N."/>
            <person name="Sanders I."/>
            <person name="Saurat O."/>
            <person name="Scarpelli C."/>
            <person name="Schiex T."/>
            <person name="Segurens B."/>
            <person name="Severin A.J."/>
            <person name="Sherrier D.J."/>
            <person name="Shi R."/>
            <person name="Sims S."/>
            <person name="Singer S.R."/>
            <person name="Sinharoy S."/>
            <person name="Sterck L."/>
            <person name="Viollet A."/>
            <person name="Wang B.-B."/>
            <person name="Wang K."/>
            <person name="Wang M."/>
            <person name="Wang X."/>
            <person name="Warfsmann J."/>
            <person name="Weissenbach J."/>
            <person name="White D.D."/>
            <person name="White J.D."/>
            <person name="Wiley G.B."/>
            <person name="Wincker P."/>
            <person name="Xing Y."/>
            <person name="Yang L."/>
            <person name="Yao Z."/>
            <person name="Ying F."/>
            <person name="Zhai J."/>
            <person name="Zhou L."/>
            <person name="Zuber A."/>
            <person name="Denarie J."/>
            <person name="Dixon R.A."/>
            <person name="May G.D."/>
            <person name="Schwartz D.C."/>
            <person name="Rogers J."/>
            <person name="Quetier F."/>
            <person name="Town C.D."/>
            <person name="Roe B.A."/>
        </authorList>
    </citation>
    <scope>NUCLEOTIDE SEQUENCE [LARGE SCALE GENOMIC DNA]</scope>
    <source>
        <strain>cv. Jemalong A17</strain>
    </source>
</reference>
<reference key="3">
    <citation type="journal article" date="2014" name="BMC Genomics">
        <title>An improved genome release (version Mt4.0) for the model legume Medicago truncatula.</title>
        <authorList>
            <person name="Tang H."/>
            <person name="Krishnakumar V."/>
            <person name="Bidwell S."/>
            <person name="Rosen B."/>
            <person name="Chan A."/>
            <person name="Zhou S."/>
            <person name="Gentzbittel L."/>
            <person name="Childs K.L."/>
            <person name="Yandell M."/>
            <person name="Gundlach H."/>
            <person name="Mayer K.F."/>
            <person name="Schwartz D.C."/>
            <person name="Town C.D."/>
        </authorList>
    </citation>
    <scope>GENOME REANNOTATION</scope>
    <source>
        <strain>cv. Jemalong A17</strain>
    </source>
</reference>
<reference key="4">
    <citation type="journal article" date="2018" name="Nat. Plants">
        <title>Whole-genome landscape of Medicago truncatula symbiotic genes.</title>
        <authorList>
            <person name="Pecrix Y."/>
            <person name="Staton S.E."/>
            <person name="Sallet E."/>
            <person name="Lelandais-Briere C."/>
            <person name="Moreau S."/>
            <person name="Carrere S."/>
            <person name="Blein T."/>
            <person name="Jardinaud M.F."/>
            <person name="Latrasse D."/>
            <person name="Zouine M."/>
            <person name="Zahm M."/>
            <person name="Kreplak J."/>
            <person name="Mayjonade B."/>
            <person name="Satge C."/>
            <person name="Perez M."/>
            <person name="Cauet S."/>
            <person name="Marande W."/>
            <person name="Chantry-Darmon C."/>
            <person name="Lopez-Roques C."/>
            <person name="Bouchez O."/>
            <person name="Berard A."/>
            <person name="Debelle F."/>
            <person name="Munos S."/>
            <person name="Bendahmane A."/>
            <person name="Berges H."/>
            <person name="Niebel A."/>
            <person name="Buitink J."/>
            <person name="Frugier F."/>
            <person name="Benhamed M."/>
            <person name="Crespi M."/>
            <person name="Gouzy J."/>
            <person name="Gamas P."/>
        </authorList>
    </citation>
    <scope>NUCLEOTIDE SEQUENCE [LARGE SCALE GENOMIC DNA]</scope>
    <source>
        <strain>cv. Jemalong A17</strain>
    </source>
</reference>
<reference key="5">
    <citation type="journal article" date="2016" name="Open Biol.">
        <title>A single amino acid substitution in a chitinase of the legume Medicago truncatula is sufficient to gain Nod-factor hydrolase activity.</title>
        <authorList>
            <person name="Zhang L.Y."/>
            <person name="Cai J."/>
            <person name="Li R.J."/>
            <person name="Liu W."/>
            <person name="Wagner C."/>
            <person name="Wong K.B."/>
            <person name="Xie Z.P."/>
            <person name="Staehelin C."/>
        </authorList>
    </citation>
    <scope>FUNCTION</scope>
    <scope>CATALYTIC ACTIVITY</scope>
</reference>
<dbReference type="EC" id="3.2.1.14" evidence="5"/>
<dbReference type="EMBL" id="KC833513">
    <property type="protein sequence ID" value="AGX84978.1"/>
    <property type="molecule type" value="mRNA"/>
</dbReference>
<dbReference type="EMBL" id="CM001217">
    <property type="protein sequence ID" value="KEH39868.1"/>
    <property type="molecule type" value="Genomic_DNA"/>
</dbReference>
<dbReference type="EMBL" id="PSQE01000001">
    <property type="protein sequence ID" value="RHN76982.1"/>
    <property type="molecule type" value="Genomic_DNA"/>
</dbReference>
<dbReference type="RefSeq" id="XP_013465832.1">
    <property type="nucleotide sequence ID" value="XM_013610378.1"/>
</dbReference>
<dbReference type="SMR" id="A0A072VEP0"/>
<dbReference type="STRING" id="3880.A0A072VEP0"/>
<dbReference type="GlyCosmos" id="A0A072VEP0">
    <property type="glycosylation" value="5 sites, No reported glycans"/>
</dbReference>
<dbReference type="EnsemblPlants" id="rna383">
    <property type="protein sequence ID" value="RHN76982.1"/>
    <property type="gene ID" value="gene383"/>
</dbReference>
<dbReference type="GeneID" id="25481955"/>
<dbReference type="Gramene" id="rna383">
    <property type="protein sequence ID" value="RHN76982.1"/>
    <property type="gene ID" value="gene383"/>
</dbReference>
<dbReference type="KEGG" id="mtr:25481955"/>
<dbReference type="HOGENOM" id="CLU_002833_3_2_1"/>
<dbReference type="OrthoDB" id="76388at2759"/>
<dbReference type="UniPathway" id="UPA00349"/>
<dbReference type="Proteomes" id="UP000002051">
    <property type="component" value="Chromosome 1"/>
</dbReference>
<dbReference type="Proteomes" id="UP000265566">
    <property type="component" value="Chromosome 1"/>
</dbReference>
<dbReference type="ExpressionAtlas" id="A0A072VEP0">
    <property type="expression patterns" value="differential"/>
</dbReference>
<dbReference type="GO" id="GO:0005576">
    <property type="term" value="C:extracellular region"/>
    <property type="evidence" value="ECO:0000318"/>
    <property type="project" value="GO_Central"/>
</dbReference>
<dbReference type="GO" id="GO:0008061">
    <property type="term" value="F:chitin binding"/>
    <property type="evidence" value="ECO:0007669"/>
    <property type="project" value="InterPro"/>
</dbReference>
<dbReference type="GO" id="GO:0004568">
    <property type="term" value="F:chitinase activity"/>
    <property type="evidence" value="ECO:0000314"/>
    <property type="project" value="UniProtKB"/>
</dbReference>
<dbReference type="GO" id="GO:0008843">
    <property type="term" value="F:endochitinase activity"/>
    <property type="evidence" value="ECO:0007669"/>
    <property type="project" value="UniProtKB-EC"/>
</dbReference>
<dbReference type="GO" id="GO:0006032">
    <property type="term" value="P:chitin catabolic process"/>
    <property type="evidence" value="ECO:0000314"/>
    <property type="project" value="UniProtKB"/>
</dbReference>
<dbReference type="GO" id="GO:0050832">
    <property type="term" value="P:defense response to fungus"/>
    <property type="evidence" value="ECO:0000314"/>
    <property type="project" value="UniProtKB"/>
</dbReference>
<dbReference type="GO" id="GO:0000272">
    <property type="term" value="P:polysaccharide catabolic process"/>
    <property type="evidence" value="ECO:0007669"/>
    <property type="project" value="UniProtKB-KW"/>
</dbReference>
<dbReference type="CDD" id="cd02879">
    <property type="entry name" value="GH18_plant_chitinase_class_V"/>
    <property type="match status" value="1"/>
</dbReference>
<dbReference type="FunFam" id="3.10.50.10:FF:000003">
    <property type="entry name" value="Class V chitinase CHIT5b"/>
    <property type="match status" value="1"/>
</dbReference>
<dbReference type="Gene3D" id="3.10.50.10">
    <property type="match status" value="1"/>
</dbReference>
<dbReference type="Gene3D" id="3.20.20.80">
    <property type="entry name" value="Glycosidases"/>
    <property type="match status" value="1"/>
</dbReference>
<dbReference type="InterPro" id="IPR011583">
    <property type="entry name" value="Chitinase_II/V-like_cat"/>
</dbReference>
<dbReference type="InterPro" id="IPR029070">
    <property type="entry name" value="Chitinase_insertion_sf"/>
</dbReference>
<dbReference type="InterPro" id="IPR001223">
    <property type="entry name" value="Glyco_hydro18_cat"/>
</dbReference>
<dbReference type="InterPro" id="IPR001579">
    <property type="entry name" value="Glyco_hydro_18_chit_AS"/>
</dbReference>
<dbReference type="InterPro" id="IPR017853">
    <property type="entry name" value="Glycoside_hydrolase_SF"/>
</dbReference>
<dbReference type="InterPro" id="IPR050314">
    <property type="entry name" value="Glycosyl_Hydrlase_18"/>
</dbReference>
<dbReference type="PANTHER" id="PTHR11177">
    <property type="entry name" value="CHITINASE"/>
    <property type="match status" value="1"/>
</dbReference>
<dbReference type="PANTHER" id="PTHR11177:SF317">
    <property type="entry name" value="CHITINASE 12-RELATED"/>
    <property type="match status" value="1"/>
</dbReference>
<dbReference type="Pfam" id="PF00704">
    <property type="entry name" value="Glyco_hydro_18"/>
    <property type="match status" value="1"/>
</dbReference>
<dbReference type="SMART" id="SM00636">
    <property type="entry name" value="Glyco_18"/>
    <property type="match status" value="1"/>
</dbReference>
<dbReference type="SUPFAM" id="SSF51445">
    <property type="entry name" value="(Trans)glycosidases"/>
    <property type="match status" value="1"/>
</dbReference>
<dbReference type="SUPFAM" id="SSF54556">
    <property type="entry name" value="Chitinase insertion domain"/>
    <property type="match status" value="1"/>
</dbReference>
<dbReference type="PROSITE" id="PS01095">
    <property type="entry name" value="GH18_1"/>
    <property type="match status" value="1"/>
</dbReference>
<dbReference type="PROSITE" id="PS51910">
    <property type="entry name" value="GH18_2"/>
    <property type="match status" value="1"/>
</dbReference>
<keyword id="KW-0119">Carbohydrate metabolism</keyword>
<keyword id="KW-0146">Chitin degradation</keyword>
<keyword id="KW-0325">Glycoprotein</keyword>
<keyword id="KW-0326">Glycosidase</keyword>
<keyword id="KW-0378">Hydrolase</keyword>
<keyword id="KW-0611">Plant defense</keyword>
<keyword id="KW-0624">Polysaccharide degradation</keyword>
<keyword id="KW-1185">Reference proteome</keyword>
<keyword id="KW-0732">Signal</keyword>